<evidence type="ECO:0000255" key="1">
    <source>
        <dbReference type="HAMAP-Rule" id="MF_01840"/>
    </source>
</evidence>
<proteinExistence type="inferred from homology"/>
<gene>
    <name evidence="1" type="primary">acsF3</name>
    <name type="ordered locus">alr3300</name>
</gene>
<keyword id="KW-0149">Chlorophyll biosynthesis</keyword>
<keyword id="KW-0408">Iron</keyword>
<keyword id="KW-0479">Metal-binding</keyword>
<keyword id="KW-0521">NADP</keyword>
<keyword id="KW-0560">Oxidoreductase</keyword>
<keyword id="KW-0602">Photosynthesis</keyword>
<keyword id="KW-1185">Reference proteome</keyword>
<name>ACSF3_NOSS1</name>
<comment type="function">
    <text evidence="1">Catalyzes the formation of the isocyclic ring in chlorophyll biosynthesis. Mediates the cyclase reaction, which results in the formation of divinylprotochlorophyllide (Pchlide) characteristic of all chlorophylls from magnesium-protoporphyrin IX 13-monomethyl ester (MgPMME).</text>
</comment>
<comment type="catalytic activity">
    <reaction evidence="1">
        <text>Mg-protoporphyrin IX 13-monomethyl ester + 3 NADPH + 3 O2 + 2 H(+) = 3,8-divinyl protochlorophyllide a + 3 NADP(+) + 5 H2O</text>
        <dbReference type="Rhea" id="RHEA:33235"/>
        <dbReference type="ChEBI" id="CHEBI:15377"/>
        <dbReference type="ChEBI" id="CHEBI:15378"/>
        <dbReference type="ChEBI" id="CHEBI:15379"/>
        <dbReference type="ChEBI" id="CHEBI:57783"/>
        <dbReference type="ChEBI" id="CHEBI:58349"/>
        <dbReference type="ChEBI" id="CHEBI:58632"/>
        <dbReference type="ChEBI" id="CHEBI:60491"/>
        <dbReference type="EC" id="1.14.13.81"/>
    </reaction>
</comment>
<comment type="cofactor">
    <cofactor evidence="1">
        <name>Fe cation</name>
        <dbReference type="ChEBI" id="CHEBI:24875"/>
    </cofactor>
</comment>
<comment type="pathway">
    <text evidence="1">Porphyrin-containing compound metabolism; chlorophyll biosynthesis (light-independent).</text>
</comment>
<comment type="similarity">
    <text evidence="1">Belongs to the AcsF family.</text>
</comment>
<sequence>MVDSLKKPGFEEIRPGVKVPAKETLLTPRFYTTDFDEMARMDISVNEDELLAILEEFRTDYNRHHFVRDAEFEKSWDHIDGDTRRLFVEFLERSCTAEFSGFLLYKELGRRLKDKSPVLAECFNLMSRDEARHAGFLNKAMSDFNLSLDLGFLTKSRNYTFFKPKFIFYATYLSEKIGYWRYITIYRHLEAHPEDRIYPIFRFFENWCQDENRHGDFFDAIMKSQPQMLNDWKAKLWSRFFLLSVFATMYLNDIQRKDFYATIGLDARDYDIYVIKKTNETAGRVFPIILDVDSPEFYERLDICVENSEKLSAIASSNTPKFLQFFQKLPVLASTGWQLLRLYLMKPIDAVSAQGAAR</sequence>
<organism>
    <name type="scientific">Nostoc sp. (strain PCC 7120 / SAG 25.82 / UTEX 2576)</name>
    <dbReference type="NCBI Taxonomy" id="103690"/>
    <lineage>
        <taxon>Bacteria</taxon>
        <taxon>Bacillati</taxon>
        <taxon>Cyanobacteriota</taxon>
        <taxon>Cyanophyceae</taxon>
        <taxon>Nostocales</taxon>
        <taxon>Nostocaceae</taxon>
        <taxon>Nostoc</taxon>
    </lineage>
</organism>
<accession>Q8YRZ2</accession>
<dbReference type="EC" id="1.14.13.81" evidence="1"/>
<dbReference type="EMBL" id="BA000019">
    <property type="protein sequence ID" value="BAB74999.1"/>
    <property type="molecule type" value="Genomic_DNA"/>
</dbReference>
<dbReference type="PIR" id="AE2218">
    <property type="entry name" value="AE2218"/>
</dbReference>
<dbReference type="STRING" id="103690.gene:10495338"/>
<dbReference type="KEGG" id="ana:alr3300"/>
<dbReference type="eggNOG" id="COG1633">
    <property type="taxonomic scope" value="Bacteria"/>
</dbReference>
<dbReference type="OrthoDB" id="141643at2"/>
<dbReference type="UniPathway" id="UPA00670"/>
<dbReference type="Proteomes" id="UP000002483">
    <property type="component" value="Chromosome"/>
</dbReference>
<dbReference type="GO" id="GO:0005506">
    <property type="term" value="F:iron ion binding"/>
    <property type="evidence" value="ECO:0007669"/>
    <property type="project" value="UniProtKB-UniRule"/>
</dbReference>
<dbReference type="GO" id="GO:0048529">
    <property type="term" value="F:magnesium-protoporphyrin IX monomethyl ester (oxidative) cyclase activity"/>
    <property type="evidence" value="ECO:0007669"/>
    <property type="project" value="UniProtKB-UniRule"/>
</dbReference>
<dbReference type="GO" id="GO:0036068">
    <property type="term" value="P:light-independent chlorophyll biosynthetic process"/>
    <property type="evidence" value="ECO:0007669"/>
    <property type="project" value="UniProtKB-UniRule"/>
</dbReference>
<dbReference type="GO" id="GO:0015979">
    <property type="term" value="P:photosynthesis"/>
    <property type="evidence" value="ECO:0007669"/>
    <property type="project" value="UniProtKB-UniRule"/>
</dbReference>
<dbReference type="CDD" id="cd01047">
    <property type="entry name" value="ACSF"/>
    <property type="match status" value="1"/>
</dbReference>
<dbReference type="HAMAP" id="MF_01840">
    <property type="entry name" value="AcsF"/>
    <property type="match status" value="1"/>
</dbReference>
<dbReference type="InterPro" id="IPR008434">
    <property type="entry name" value="AcsF"/>
</dbReference>
<dbReference type="InterPro" id="IPR009078">
    <property type="entry name" value="Ferritin-like_SF"/>
</dbReference>
<dbReference type="InterPro" id="IPR003251">
    <property type="entry name" value="Rr_diiron-bd_dom"/>
</dbReference>
<dbReference type="NCBIfam" id="TIGR02029">
    <property type="entry name" value="AcsF"/>
    <property type="match status" value="1"/>
</dbReference>
<dbReference type="NCBIfam" id="NF010172">
    <property type="entry name" value="PRK13654.1"/>
    <property type="match status" value="1"/>
</dbReference>
<dbReference type="PANTHER" id="PTHR31053">
    <property type="entry name" value="MAGNESIUM-PROTOPORPHYRIN IX MONOMETHYL ESTER [OXIDATIVE] CYCLASE, CHLOROPLASTIC"/>
    <property type="match status" value="1"/>
</dbReference>
<dbReference type="PANTHER" id="PTHR31053:SF2">
    <property type="entry name" value="MAGNESIUM-PROTOPORPHYRIN IX MONOMETHYL ESTER [OXIDATIVE] CYCLASE, CHLOROPLASTIC"/>
    <property type="match status" value="1"/>
</dbReference>
<dbReference type="Pfam" id="PF02915">
    <property type="entry name" value="Rubrerythrin"/>
    <property type="match status" value="1"/>
</dbReference>
<dbReference type="SUPFAM" id="SSF47240">
    <property type="entry name" value="Ferritin-like"/>
    <property type="match status" value="1"/>
</dbReference>
<reference key="1">
    <citation type="journal article" date="2001" name="DNA Res.">
        <title>Complete genomic sequence of the filamentous nitrogen-fixing cyanobacterium Anabaena sp. strain PCC 7120.</title>
        <authorList>
            <person name="Kaneko T."/>
            <person name="Nakamura Y."/>
            <person name="Wolk C.P."/>
            <person name="Kuritz T."/>
            <person name="Sasamoto S."/>
            <person name="Watanabe A."/>
            <person name="Iriguchi M."/>
            <person name="Ishikawa A."/>
            <person name="Kawashima K."/>
            <person name="Kimura T."/>
            <person name="Kishida Y."/>
            <person name="Kohara M."/>
            <person name="Matsumoto M."/>
            <person name="Matsuno A."/>
            <person name="Muraki A."/>
            <person name="Nakazaki N."/>
            <person name="Shimpo S."/>
            <person name="Sugimoto M."/>
            <person name="Takazawa M."/>
            <person name="Yamada M."/>
            <person name="Yasuda M."/>
            <person name="Tabata S."/>
        </authorList>
    </citation>
    <scope>NUCLEOTIDE SEQUENCE [LARGE SCALE GENOMIC DNA]</scope>
    <source>
        <strain>PCC 7120 / SAG 25.82 / UTEX 2576</strain>
    </source>
</reference>
<feature type="chain" id="PRO_0000217528" description="Magnesium-protoporphyrin IX monomethyl ester [oxidative] cyclase 3">
    <location>
        <begin position="1"/>
        <end position="358"/>
    </location>
</feature>
<protein>
    <recommendedName>
        <fullName evidence="1">Magnesium-protoporphyrin IX monomethyl ester [oxidative] cyclase 3</fullName>
        <shortName evidence="1">Mg-protoporphyrin IX monomethyl ester oxidative cyclase 3</shortName>
        <ecNumber evidence="1">1.14.13.81</ecNumber>
    </recommendedName>
</protein>